<name>KEFC_ECOL6</name>
<sequence>MDSHTLIQALIYLGSAALIVPIAVRLGLGSVLGYLIAGCIIGPWGLRLVTDAESILHFAEIGVVLMLFIIGLELDPQRLWKLRAAVFGGGALQMVICGGLLGLFCMLLGLRWQVAELIGMTLALSSTAIAMQAMNERNLMVTQMGRSAFAVLLFQDIAAIPLVAMIPLLAASSASTTMGAFVLSALKVAGALALVVLLGRYVTRPALRFVARSGLREVFSAVALFLVFGFGLLLEEVGLSMAMGAFLAGVLLASSEYRHALESDIEPFKGLLLGLFFIGVGMSIDFGTLLENPLRIVILLLGFLIIKIAMLWLIARPLQVPNKQRRWFAVLLGQGSEFAFVVFGAAQMANVLEPEWAKSLTLAVALSMAATPILLVILNRLEQSSTEEAREADEIDEEQPRVIIAGFGRFGQITGRLLLSSGVKMVVLDHDPDHIETLRKFGMKVFYGDATRMDLLESAGAAKAEVLINAIDDPQTNLQLTEMVKEHFPHLQIIARARDVDHYIRLRQAGVEKPERETFEGALKTGRLALESLGLGPYEARERADVFRRFNIQMVEEMAMVENDTKARAAVYKRTSAMLSEIITEDREHLSLIQRHGWQGTEEGKHTGNMADEPETKPSS</sequence>
<proteinExistence type="inferred from homology"/>
<protein>
    <recommendedName>
        <fullName evidence="2">Glutathione-regulated potassium-efflux system protein KefC</fullName>
    </recommendedName>
    <alternativeName>
        <fullName evidence="2">K(+)/H(+) antiporter</fullName>
    </alternativeName>
</protein>
<evidence type="ECO:0000255" key="1"/>
<evidence type="ECO:0000255" key="2">
    <source>
        <dbReference type="HAMAP-Rule" id="MF_01413"/>
    </source>
</evidence>
<evidence type="ECO:0000255" key="3">
    <source>
        <dbReference type="PROSITE-ProRule" id="PRU00543"/>
    </source>
</evidence>
<evidence type="ECO:0000256" key="4">
    <source>
        <dbReference type="SAM" id="MobiDB-lite"/>
    </source>
</evidence>
<comment type="function">
    <text evidence="2">Pore-forming subunit of a potassium efflux system that confers protection against electrophiles. Catalyzes K(+)/H(+) antiport.</text>
</comment>
<comment type="subunit">
    <text evidence="2">Homodimer. Interacts with the regulatory subunit KefF.</text>
</comment>
<comment type="subcellular location">
    <subcellularLocation>
        <location evidence="2">Cell inner membrane</location>
        <topology evidence="2">Multi-pass membrane protein</topology>
    </subcellularLocation>
</comment>
<comment type="similarity">
    <text evidence="2">Belongs to the monovalent cation:proton antiporter 2 (CPA2) transporter (TC 2.A.37) family. KefC subfamily.</text>
</comment>
<gene>
    <name evidence="2" type="primary">kefC</name>
    <name type="ordered locus">c0057</name>
</gene>
<keyword id="KW-0050">Antiport</keyword>
<keyword id="KW-0997">Cell inner membrane</keyword>
<keyword id="KW-1003">Cell membrane</keyword>
<keyword id="KW-0406">Ion transport</keyword>
<keyword id="KW-0472">Membrane</keyword>
<keyword id="KW-0630">Potassium</keyword>
<keyword id="KW-0633">Potassium transport</keyword>
<keyword id="KW-1185">Reference proteome</keyword>
<keyword id="KW-0812">Transmembrane</keyword>
<keyword id="KW-1133">Transmembrane helix</keyword>
<keyword id="KW-0813">Transport</keyword>
<organism>
    <name type="scientific">Escherichia coli O6:H1 (strain CFT073 / ATCC 700928 / UPEC)</name>
    <dbReference type="NCBI Taxonomy" id="199310"/>
    <lineage>
        <taxon>Bacteria</taxon>
        <taxon>Pseudomonadati</taxon>
        <taxon>Pseudomonadota</taxon>
        <taxon>Gammaproteobacteria</taxon>
        <taxon>Enterobacterales</taxon>
        <taxon>Enterobacteriaceae</taxon>
        <taxon>Escherichia</taxon>
    </lineage>
</organism>
<reference key="1">
    <citation type="journal article" date="2002" name="Proc. Natl. Acad. Sci. U.S.A.">
        <title>Extensive mosaic structure revealed by the complete genome sequence of uropathogenic Escherichia coli.</title>
        <authorList>
            <person name="Welch R.A."/>
            <person name="Burland V."/>
            <person name="Plunkett G. III"/>
            <person name="Redford P."/>
            <person name="Roesch P."/>
            <person name="Rasko D."/>
            <person name="Buckles E.L."/>
            <person name="Liou S.-R."/>
            <person name="Boutin A."/>
            <person name="Hackett J."/>
            <person name="Stroud D."/>
            <person name="Mayhew G.F."/>
            <person name="Rose D.J."/>
            <person name="Zhou S."/>
            <person name="Schwartz D.C."/>
            <person name="Perna N.T."/>
            <person name="Mobley H.L.T."/>
            <person name="Donnenberg M.S."/>
            <person name="Blattner F.R."/>
        </authorList>
    </citation>
    <scope>NUCLEOTIDE SEQUENCE [LARGE SCALE GENOMIC DNA]</scope>
    <source>
        <strain>CFT073 / ATCC 700928 / UPEC</strain>
    </source>
</reference>
<feature type="chain" id="PRO_0000196607" description="Glutathione-regulated potassium-efflux system protein KefC">
    <location>
        <begin position="1"/>
        <end position="620"/>
    </location>
</feature>
<feature type="topological domain" description="Periplasmic" evidence="1">
    <location>
        <begin position="1"/>
        <end position="3"/>
    </location>
</feature>
<feature type="transmembrane region" description="Helical" evidence="2">
    <location>
        <begin position="4"/>
        <end position="24"/>
    </location>
</feature>
<feature type="topological domain" description="Cytoplasmic" evidence="1">
    <location>
        <position position="25"/>
    </location>
</feature>
<feature type="transmembrane region" description="Helical" evidence="2">
    <location>
        <begin position="26"/>
        <end position="46"/>
    </location>
</feature>
<feature type="topological domain" description="Periplasmic" evidence="1">
    <location>
        <begin position="47"/>
        <end position="53"/>
    </location>
</feature>
<feature type="transmembrane region" description="Helical" evidence="2">
    <location>
        <begin position="54"/>
        <end position="74"/>
    </location>
</feature>
<feature type="topological domain" description="Cytoplasmic" evidence="1">
    <location>
        <begin position="75"/>
        <end position="89"/>
    </location>
</feature>
<feature type="transmembrane region" description="Helical" evidence="2">
    <location>
        <begin position="90"/>
        <end position="110"/>
    </location>
</feature>
<feature type="topological domain" description="Periplasmic" evidence="1">
    <location>
        <begin position="111"/>
        <end position="113"/>
    </location>
</feature>
<feature type="transmembrane region" description="Helical" evidence="2">
    <location>
        <begin position="114"/>
        <end position="134"/>
    </location>
</feature>
<feature type="topological domain" description="Cytoplasmic" evidence="1">
    <location>
        <begin position="135"/>
        <end position="148"/>
    </location>
</feature>
<feature type="transmembrane region" description="Helical" evidence="2">
    <location>
        <begin position="149"/>
        <end position="169"/>
    </location>
</feature>
<feature type="topological domain" description="Periplasmic" evidence="1">
    <location>
        <begin position="170"/>
        <end position="177"/>
    </location>
</feature>
<feature type="transmembrane region" description="Helical" evidence="2">
    <location>
        <begin position="178"/>
        <end position="198"/>
    </location>
</feature>
<feature type="topological domain" description="Cytoplasmic" evidence="1">
    <location>
        <begin position="199"/>
        <end position="213"/>
    </location>
</feature>
<feature type="transmembrane region" description="Helical" evidence="2">
    <location>
        <begin position="214"/>
        <end position="233"/>
    </location>
</feature>
<feature type="topological domain" description="Periplasmic" evidence="1">
    <location>
        <begin position="234"/>
        <end position="236"/>
    </location>
</feature>
<feature type="transmembrane region" description="Helical" evidence="2">
    <location>
        <begin position="237"/>
        <end position="254"/>
    </location>
</feature>
<feature type="topological domain" description="Cytoplasmic" evidence="1">
    <location>
        <begin position="255"/>
        <end position="269"/>
    </location>
</feature>
<feature type="transmembrane region" description="Helical" evidence="2">
    <location>
        <begin position="270"/>
        <end position="290"/>
    </location>
</feature>
<feature type="topological domain" description="Periplasmic" evidence="1">
    <location>
        <begin position="291"/>
        <end position="293"/>
    </location>
</feature>
<feature type="transmembrane region" description="Helical" evidence="2">
    <location>
        <begin position="294"/>
        <end position="314"/>
    </location>
</feature>
<feature type="topological domain" description="Cytoplasmic" evidence="1">
    <location>
        <begin position="315"/>
        <end position="326"/>
    </location>
</feature>
<feature type="transmembrane region" description="Helical" evidence="2">
    <location>
        <begin position="327"/>
        <end position="347"/>
    </location>
</feature>
<feature type="topological domain" description="Periplasmic" evidence="1">
    <location>
        <begin position="348"/>
        <end position="358"/>
    </location>
</feature>
<feature type="transmembrane region" description="Helical" evidence="2">
    <location>
        <begin position="359"/>
        <end position="379"/>
    </location>
</feature>
<feature type="topological domain" description="Cytoplasmic" evidence="1">
    <location>
        <begin position="380"/>
        <end position="620"/>
    </location>
</feature>
<feature type="domain" description="RCK N-terminal" evidence="3">
    <location>
        <begin position="399"/>
        <end position="518"/>
    </location>
</feature>
<feature type="region of interest" description="Disordered" evidence="4">
    <location>
        <begin position="597"/>
        <end position="620"/>
    </location>
</feature>
<dbReference type="EMBL" id="AE014075">
    <property type="protein sequence ID" value="AAN78553.1"/>
    <property type="molecule type" value="Genomic_DNA"/>
</dbReference>
<dbReference type="RefSeq" id="WP_000377123.1">
    <property type="nucleotide sequence ID" value="NZ_CP051263.1"/>
</dbReference>
<dbReference type="SMR" id="Q8FLA1"/>
<dbReference type="STRING" id="199310.c0057"/>
<dbReference type="DNASU" id="1035128"/>
<dbReference type="KEGG" id="ecc:c0057"/>
<dbReference type="eggNOG" id="COG0475">
    <property type="taxonomic scope" value="Bacteria"/>
</dbReference>
<dbReference type="eggNOG" id="COG1226">
    <property type="taxonomic scope" value="Bacteria"/>
</dbReference>
<dbReference type="HOGENOM" id="CLU_005126_9_3_6"/>
<dbReference type="BioCyc" id="ECOL199310:C0057-MONOMER"/>
<dbReference type="Proteomes" id="UP000001410">
    <property type="component" value="Chromosome"/>
</dbReference>
<dbReference type="GO" id="GO:0005886">
    <property type="term" value="C:plasma membrane"/>
    <property type="evidence" value="ECO:0007669"/>
    <property type="project" value="UniProtKB-SubCell"/>
</dbReference>
<dbReference type="GO" id="GO:0019899">
    <property type="term" value="F:enzyme binding"/>
    <property type="evidence" value="ECO:0007669"/>
    <property type="project" value="InterPro"/>
</dbReference>
<dbReference type="GO" id="GO:0015503">
    <property type="term" value="F:glutathione-regulated potassium exporter activity"/>
    <property type="evidence" value="ECO:0007669"/>
    <property type="project" value="UniProtKB-UniRule"/>
</dbReference>
<dbReference type="GO" id="GO:0015643">
    <property type="term" value="F:toxic substance binding"/>
    <property type="evidence" value="ECO:0007669"/>
    <property type="project" value="InterPro"/>
</dbReference>
<dbReference type="GO" id="GO:1902600">
    <property type="term" value="P:proton transmembrane transport"/>
    <property type="evidence" value="ECO:0007669"/>
    <property type="project" value="InterPro"/>
</dbReference>
<dbReference type="GO" id="GO:0051595">
    <property type="term" value="P:response to methylglyoxal"/>
    <property type="evidence" value="ECO:0007669"/>
    <property type="project" value="InterPro"/>
</dbReference>
<dbReference type="FunFam" id="1.20.1530.20:FF:000001">
    <property type="entry name" value="Glutathione-regulated potassium-efflux system protein KefB"/>
    <property type="match status" value="1"/>
</dbReference>
<dbReference type="FunFam" id="3.40.50.720:FF:000036">
    <property type="entry name" value="Glutathione-regulated potassium-efflux system protein KefB"/>
    <property type="match status" value="1"/>
</dbReference>
<dbReference type="Gene3D" id="1.20.1530.20">
    <property type="match status" value="1"/>
</dbReference>
<dbReference type="Gene3D" id="3.40.50.720">
    <property type="entry name" value="NAD(P)-binding Rossmann-like Domain"/>
    <property type="match status" value="1"/>
</dbReference>
<dbReference type="HAMAP" id="MF_01413">
    <property type="entry name" value="K_H_efflux_KefC"/>
    <property type="match status" value="1"/>
</dbReference>
<dbReference type="InterPro" id="IPR006153">
    <property type="entry name" value="Cation/H_exchanger_TM"/>
</dbReference>
<dbReference type="InterPro" id="IPR004771">
    <property type="entry name" value="K/H_exchanger"/>
</dbReference>
<dbReference type="InterPro" id="IPR023941">
    <property type="entry name" value="K_H_efflux_KefC"/>
</dbReference>
<dbReference type="InterPro" id="IPR006036">
    <property type="entry name" value="K_uptake_TrkA"/>
</dbReference>
<dbReference type="InterPro" id="IPR038770">
    <property type="entry name" value="Na+/solute_symporter_sf"/>
</dbReference>
<dbReference type="InterPro" id="IPR036291">
    <property type="entry name" value="NAD(P)-bd_dom_sf"/>
</dbReference>
<dbReference type="InterPro" id="IPR003148">
    <property type="entry name" value="RCK_N"/>
</dbReference>
<dbReference type="NCBIfam" id="TIGR00932">
    <property type="entry name" value="2a37"/>
    <property type="match status" value="1"/>
</dbReference>
<dbReference type="NCBIfam" id="NF002924">
    <property type="entry name" value="PRK03562.1"/>
    <property type="match status" value="1"/>
</dbReference>
<dbReference type="PANTHER" id="PTHR46157:SF3">
    <property type="entry name" value="GLUTATHIONE-REGULATED POTASSIUM-EFFLUX SYSTEM PROTEIN KEFC"/>
    <property type="match status" value="1"/>
</dbReference>
<dbReference type="PANTHER" id="PTHR46157">
    <property type="entry name" value="K(+) EFFLUX ANTIPORTER 3, CHLOROPLASTIC"/>
    <property type="match status" value="1"/>
</dbReference>
<dbReference type="Pfam" id="PF00999">
    <property type="entry name" value="Na_H_Exchanger"/>
    <property type="match status" value="1"/>
</dbReference>
<dbReference type="Pfam" id="PF02254">
    <property type="entry name" value="TrkA_N"/>
    <property type="match status" value="1"/>
</dbReference>
<dbReference type="PRINTS" id="PR00335">
    <property type="entry name" value="KUPTAKETRKA"/>
</dbReference>
<dbReference type="SUPFAM" id="SSF51735">
    <property type="entry name" value="NAD(P)-binding Rossmann-fold domains"/>
    <property type="match status" value="1"/>
</dbReference>
<dbReference type="PROSITE" id="PS51201">
    <property type="entry name" value="RCK_N"/>
    <property type="match status" value="1"/>
</dbReference>
<accession>Q8FLA1</accession>